<comment type="function">
    <text evidence="1">Required for accurate and efficient protein synthesis under certain stress conditions. May act as a fidelity factor of the translation reaction, by catalyzing a one-codon backward translocation of tRNAs on improperly translocated ribosomes. Back-translocation proceeds from a post-translocation (POST) complex to a pre-translocation (PRE) complex, thus giving elongation factor G a second chance to translocate the tRNAs correctly. Binds to ribosomes in a GTP-dependent manner.</text>
</comment>
<comment type="catalytic activity">
    <reaction evidence="1">
        <text>GTP + H2O = GDP + phosphate + H(+)</text>
        <dbReference type="Rhea" id="RHEA:19669"/>
        <dbReference type="ChEBI" id="CHEBI:15377"/>
        <dbReference type="ChEBI" id="CHEBI:15378"/>
        <dbReference type="ChEBI" id="CHEBI:37565"/>
        <dbReference type="ChEBI" id="CHEBI:43474"/>
        <dbReference type="ChEBI" id="CHEBI:58189"/>
        <dbReference type="EC" id="3.6.5.n1"/>
    </reaction>
</comment>
<comment type="subcellular location">
    <subcellularLocation>
        <location evidence="1">Cell membrane</location>
        <topology evidence="1">Peripheral membrane protein</topology>
        <orientation evidence="1">Cytoplasmic side</orientation>
    </subcellularLocation>
</comment>
<comment type="similarity">
    <text evidence="1">Belongs to the TRAFAC class translation factor GTPase superfamily. Classic translation factor GTPase family. LepA subfamily.</text>
</comment>
<name>LEPA_BACC7</name>
<keyword id="KW-1003">Cell membrane</keyword>
<keyword id="KW-0342">GTP-binding</keyword>
<keyword id="KW-0378">Hydrolase</keyword>
<keyword id="KW-0472">Membrane</keyword>
<keyword id="KW-0547">Nucleotide-binding</keyword>
<keyword id="KW-0648">Protein biosynthesis</keyword>
<organism>
    <name type="scientific">Bacillus cereus (strain AH187)</name>
    <dbReference type="NCBI Taxonomy" id="405534"/>
    <lineage>
        <taxon>Bacteria</taxon>
        <taxon>Bacillati</taxon>
        <taxon>Bacillota</taxon>
        <taxon>Bacilli</taxon>
        <taxon>Bacillales</taxon>
        <taxon>Bacillaceae</taxon>
        <taxon>Bacillus</taxon>
        <taxon>Bacillus cereus group</taxon>
    </lineage>
</organism>
<evidence type="ECO:0000255" key="1">
    <source>
        <dbReference type="HAMAP-Rule" id="MF_00071"/>
    </source>
</evidence>
<protein>
    <recommendedName>
        <fullName evidence="1">Elongation factor 4</fullName>
        <shortName evidence="1">EF-4</shortName>
        <ecNumber evidence="1">3.6.5.n1</ecNumber>
    </recommendedName>
    <alternativeName>
        <fullName evidence="1">Ribosomal back-translocase LepA</fullName>
    </alternativeName>
</protein>
<reference key="1">
    <citation type="submission" date="2008-10" db="EMBL/GenBank/DDBJ databases">
        <title>Genome sequence of Bacillus cereus AH187.</title>
        <authorList>
            <person name="Dodson R.J."/>
            <person name="Durkin A.S."/>
            <person name="Rosovitz M.J."/>
            <person name="Rasko D.A."/>
            <person name="Kolsto A.B."/>
            <person name="Okstad O.A."/>
            <person name="Ravel J."/>
            <person name="Sutton G."/>
        </authorList>
    </citation>
    <scope>NUCLEOTIDE SEQUENCE [LARGE SCALE GENOMIC DNA]</scope>
    <source>
        <strain>AH187</strain>
    </source>
</reference>
<accession>B7HPL8</accession>
<dbReference type="EC" id="3.6.5.n1" evidence="1"/>
<dbReference type="EMBL" id="CP001177">
    <property type="protein sequence ID" value="ACJ81689.1"/>
    <property type="molecule type" value="Genomic_DNA"/>
</dbReference>
<dbReference type="SMR" id="B7HPL8"/>
<dbReference type="KEGG" id="bcr:BCAH187_A4452"/>
<dbReference type="HOGENOM" id="CLU_009995_3_3_9"/>
<dbReference type="Proteomes" id="UP000002214">
    <property type="component" value="Chromosome"/>
</dbReference>
<dbReference type="GO" id="GO:0005886">
    <property type="term" value="C:plasma membrane"/>
    <property type="evidence" value="ECO:0007669"/>
    <property type="project" value="UniProtKB-SubCell"/>
</dbReference>
<dbReference type="GO" id="GO:0005525">
    <property type="term" value="F:GTP binding"/>
    <property type="evidence" value="ECO:0007669"/>
    <property type="project" value="UniProtKB-UniRule"/>
</dbReference>
<dbReference type="GO" id="GO:0003924">
    <property type="term" value="F:GTPase activity"/>
    <property type="evidence" value="ECO:0007669"/>
    <property type="project" value="UniProtKB-UniRule"/>
</dbReference>
<dbReference type="GO" id="GO:0043022">
    <property type="term" value="F:ribosome binding"/>
    <property type="evidence" value="ECO:0007669"/>
    <property type="project" value="UniProtKB-UniRule"/>
</dbReference>
<dbReference type="GO" id="GO:0003746">
    <property type="term" value="F:translation elongation factor activity"/>
    <property type="evidence" value="ECO:0007669"/>
    <property type="project" value="UniProtKB-UniRule"/>
</dbReference>
<dbReference type="GO" id="GO:0045727">
    <property type="term" value="P:positive regulation of translation"/>
    <property type="evidence" value="ECO:0007669"/>
    <property type="project" value="UniProtKB-UniRule"/>
</dbReference>
<dbReference type="CDD" id="cd03699">
    <property type="entry name" value="EF4_II"/>
    <property type="match status" value="1"/>
</dbReference>
<dbReference type="CDD" id="cd16260">
    <property type="entry name" value="EF4_III"/>
    <property type="match status" value="1"/>
</dbReference>
<dbReference type="CDD" id="cd01890">
    <property type="entry name" value="LepA"/>
    <property type="match status" value="1"/>
</dbReference>
<dbReference type="CDD" id="cd03709">
    <property type="entry name" value="lepA_C"/>
    <property type="match status" value="1"/>
</dbReference>
<dbReference type="FunFam" id="3.40.50.300:FF:000078">
    <property type="entry name" value="Elongation factor 4"/>
    <property type="match status" value="1"/>
</dbReference>
<dbReference type="FunFam" id="2.40.30.10:FF:000015">
    <property type="entry name" value="Translation factor GUF1, mitochondrial"/>
    <property type="match status" value="1"/>
</dbReference>
<dbReference type="FunFam" id="3.30.70.240:FF:000007">
    <property type="entry name" value="Translation factor GUF1, mitochondrial"/>
    <property type="match status" value="1"/>
</dbReference>
<dbReference type="FunFam" id="3.30.70.2570:FF:000001">
    <property type="entry name" value="Translation factor GUF1, mitochondrial"/>
    <property type="match status" value="1"/>
</dbReference>
<dbReference type="FunFam" id="3.30.70.870:FF:000004">
    <property type="entry name" value="Translation factor GUF1, mitochondrial"/>
    <property type="match status" value="1"/>
</dbReference>
<dbReference type="Gene3D" id="3.30.70.240">
    <property type="match status" value="1"/>
</dbReference>
<dbReference type="Gene3D" id="3.30.70.2570">
    <property type="entry name" value="Elongation factor 4, C-terminal domain"/>
    <property type="match status" value="1"/>
</dbReference>
<dbReference type="Gene3D" id="3.30.70.870">
    <property type="entry name" value="Elongation Factor G (Translational Gtpase), domain 3"/>
    <property type="match status" value="1"/>
</dbReference>
<dbReference type="Gene3D" id="3.40.50.300">
    <property type="entry name" value="P-loop containing nucleotide triphosphate hydrolases"/>
    <property type="match status" value="1"/>
</dbReference>
<dbReference type="Gene3D" id="2.40.30.10">
    <property type="entry name" value="Translation factors"/>
    <property type="match status" value="1"/>
</dbReference>
<dbReference type="HAMAP" id="MF_00071">
    <property type="entry name" value="LepA"/>
    <property type="match status" value="1"/>
</dbReference>
<dbReference type="InterPro" id="IPR006297">
    <property type="entry name" value="EF-4"/>
</dbReference>
<dbReference type="InterPro" id="IPR035647">
    <property type="entry name" value="EFG_III/V"/>
</dbReference>
<dbReference type="InterPro" id="IPR000640">
    <property type="entry name" value="EFG_V-like"/>
</dbReference>
<dbReference type="InterPro" id="IPR004161">
    <property type="entry name" value="EFTu-like_2"/>
</dbReference>
<dbReference type="InterPro" id="IPR031157">
    <property type="entry name" value="G_TR_CS"/>
</dbReference>
<dbReference type="InterPro" id="IPR038363">
    <property type="entry name" value="LepA_C_sf"/>
</dbReference>
<dbReference type="InterPro" id="IPR013842">
    <property type="entry name" value="LepA_CTD"/>
</dbReference>
<dbReference type="InterPro" id="IPR035654">
    <property type="entry name" value="LepA_IV"/>
</dbReference>
<dbReference type="InterPro" id="IPR027417">
    <property type="entry name" value="P-loop_NTPase"/>
</dbReference>
<dbReference type="InterPro" id="IPR005225">
    <property type="entry name" value="Small_GTP-bd"/>
</dbReference>
<dbReference type="InterPro" id="IPR000795">
    <property type="entry name" value="T_Tr_GTP-bd_dom"/>
</dbReference>
<dbReference type="NCBIfam" id="TIGR01393">
    <property type="entry name" value="lepA"/>
    <property type="match status" value="1"/>
</dbReference>
<dbReference type="NCBIfam" id="TIGR00231">
    <property type="entry name" value="small_GTP"/>
    <property type="match status" value="1"/>
</dbReference>
<dbReference type="PANTHER" id="PTHR43512:SF4">
    <property type="entry name" value="TRANSLATION FACTOR GUF1 HOMOLOG, CHLOROPLASTIC"/>
    <property type="match status" value="1"/>
</dbReference>
<dbReference type="PANTHER" id="PTHR43512">
    <property type="entry name" value="TRANSLATION FACTOR GUF1-RELATED"/>
    <property type="match status" value="1"/>
</dbReference>
<dbReference type="Pfam" id="PF00679">
    <property type="entry name" value="EFG_C"/>
    <property type="match status" value="1"/>
</dbReference>
<dbReference type="Pfam" id="PF00009">
    <property type="entry name" value="GTP_EFTU"/>
    <property type="match status" value="1"/>
</dbReference>
<dbReference type="Pfam" id="PF03144">
    <property type="entry name" value="GTP_EFTU_D2"/>
    <property type="match status" value="1"/>
</dbReference>
<dbReference type="Pfam" id="PF06421">
    <property type="entry name" value="LepA_C"/>
    <property type="match status" value="1"/>
</dbReference>
<dbReference type="PRINTS" id="PR00315">
    <property type="entry name" value="ELONGATNFCT"/>
</dbReference>
<dbReference type="SMART" id="SM00838">
    <property type="entry name" value="EFG_C"/>
    <property type="match status" value="1"/>
</dbReference>
<dbReference type="SUPFAM" id="SSF54980">
    <property type="entry name" value="EF-G C-terminal domain-like"/>
    <property type="match status" value="2"/>
</dbReference>
<dbReference type="SUPFAM" id="SSF52540">
    <property type="entry name" value="P-loop containing nucleoside triphosphate hydrolases"/>
    <property type="match status" value="1"/>
</dbReference>
<dbReference type="PROSITE" id="PS00301">
    <property type="entry name" value="G_TR_1"/>
    <property type="match status" value="1"/>
</dbReference>
<dbReference type="PROSITE" id="PS51722">
    <property type="entry name" value="G_TR_2"/>
    <property type="match status" value="1"/>
</dbReference>
<gene>
    <name evidence="1" type="primary">lepA</name>
    <name type="ordered locus">BCAH187_A4452</name>
</gene>
<proteinExistence type="inferred from homology"/>
<feature type="chain" id="PRO_1000117017" description="Elongation factor 4">
    <location>
        <begin position="1"/>
        <end position="607"/>
    </location>
</feature>
<feature type="domain" description="tr-type G">
    <location>
        <begin position="11"/>
        <end position="193"/>
    </location>
</feature>
<feature type="binding site" evidence="1">
    <location>
        <begin position="23"/>
        <end position="28"/>
    </location>
    <ligand>
        <name>GTP</name>
        <dbReference type="ChEBI" id="CHEBI:37565"/>
    </ligand>
</feature>
<feature type="binding site" evidence="1">
    <location>
        <begin position="140"/>
        <end position="143"/>
    </location>
    <ligand>
        <name>GTP</name>
        <dbReference type="ChEBI" id="CHEBI:37565"/>
    </ligand>
</feature>
<sequence length="607" mass="67935">MNKEERAKRQSKIRNFSIIAHIDHGKSTLADRILEKTNALTQREMKAQLLDSMDLERERGITIKLNAVQLNYKAKDGEEYILHLIDTPGHVDFTYEVSRSLAACEGAILVVDAAQGIEAQTLANVYLALDNNLEILPVINKIDLPSADPERVRQEVEDVIGLDASEAVLASAKAGIGIEEILEQIVEKVPAPTGDSEEPLQCMIFDSLYDPYRGVIAYIRVVNGTVKVGDKVRMMATGKEFEVTEVGVFTPKTTQRDELTVGDVGFLAASIKNVGDTRVGDTITHAKRPAAEPLAGYRKLNPMVFCGLYPIDSARYNDLRDALEKLELNDSALEFEPETSQALGFGFRCGFLGLLHMEIIQERIEREFKIDLITTAPSVIYKVFLTNGEDMIVDNPSNMPDPQTIDRVEEPFVKAAIMVPNDYVGAVMEICQGKRGTFIDMQYLDETRVTLTYEIPLSEIVYDFFDQLKSNTKGYASFDYELIGYKPSKLVKMDILLNSEQVDALSFIVHRDSAYDRGKVIVEKLKELIPRQQFEVPIQATIGNKVVARSTIKAMRKNVLAKCYGGDISRKRKLLDKQKEGKKRMKSVGSVEVPQEAFMAVLKMDDN</sequence>